<comment type="catalytic activity">
    <reaction evidence="1">
        <text>L-histidinol phosphate + 2-oxoglutarate = 3-(imidazol-4-yl)-2-oxopropyl phosphate + L-glutamate</text>
        <dbReference type="Rhea" id="RHEA:23744"/>
        <dbReference type="ChEBI" id="CHEBI:16810"/>
        <dbReference type="ChEBI" id="CHEBI:29985"/>
        <dbReference type="ChEBI" id="CHEBI:57766"/>
        <dbReference type="ChEBI" id="CHEBI:57980"/>
        <dbReference type="EC" id="2.6.1.9"/>
    </reaction>
</comment>
<comment type="cofactor">
    <cofactor evidence="1">
        <name>pyridoxal 5'-phosphate</name>
        <dbReference type="ChEBI" id="CHEBI:597326"/>
    </cofactor>
</comment>
<comment type="pathway">
    <text evidence="1">Amino-acid biosynthesis; L-histidine biosynthesis; L-histidine from 5-phospho-alpha-D-ribose 1-diphosphate: step 7/9.</text>
</comment>
<comment type="subunit">
    <text evidence="1">Homodimer.</text>
</comment>
<comment type="similarity">
    <text evidence="1">Belongs to the class-II pyridoxal-phosphate-dependent aminotransferase family. Histidinol-phosphate aminotransferase subfamily.</text>
</comment>
<keyword id="KW-0002">3D-structure</keyword>
<keyword id="KW-0028">Amino-acid biosynthesis</keyword>
<keyword id="KW-0032">Aminotransferase</keyword>
<keyword id="KW-0368">Histidine biosynthesis</keyword>
<keyword id="KW-0663">Pyridoxal phosphate</keyword>
<keyword id="KW-0808">Transferase</keyword>
<protein>
    <recommendedName>
        <fullName evidence="1">Histidinol-phosphate aminotransferase 2</fullName>
        <ecNumber evidence="1">2.6.1.9</ecNumber>
    </recommendedName>
    <alternativeName>
        <fullName evidence="1">Imidazole acetol-phosphate transaminase 2</fullName>
    </alternativeName>
</protein>
<sequence length="366" mass="39607">MSVVDPSLIERIIRDDVRAMGAYHVPDSHGLVKLDAMENPYRLPPALRSELAARLGEVALNRYPVPSSEALRAKLKEVMQVPAGMEVLLGNGSDEIISMLALAAARPGAKVMAPVPGFVMYAMSAQFAGLEFVGVPLRADFTLDRGAMLAAMAEHQPAIVYLAYPNNPTGNLFDAADMEAIVRAAQGSVCRSLVVVDEAYQPFAQESWMSRLTDFGNLLVMRTVSKLGLAGIRLGYVAGDPQWLEQLDKVRPPYNVNVLTEATALFALEHVAVLDEQAAQLRAERSRVAEGMAAHGGVTVFPSAANFLLARVPDAAQTFDRLLARKVLIKNVSKMHPLLANCLRVTVSTPEENAQFLEAFAASLQD</sequence>
<name>HIS82_CUPPJ</name>
<proteinExistence type="evidence at protein level"/>
<dbReference type="EC" id="2.6.1.9" evidence="1"/>
<dbReference type="EMBL" id="CP000090">
    <property type="protein sequence ID" value="AAZ62470.1"/>
    <property type="molecule type" value="Genomic_DNA"/>
</dbReference>
<dbReference type="PDB" id="3EUC">
    <property type="method" value="X-ray"/>
    <property type="resolution" value="2.05 A"/>
    <property type="chains" value="A/B=1-366"/>
</dbReference>
<dbReference type="PDBsum" id="3EUC"/>
<dbReference type="SMR" id="Q46WL3"/>
<dbReference type="STRING" id="264198.Reut_A3110"/>
<dbReference type="DNASU" id="3609701"/>
<dbReference type="KEGG" id="reu:Reut_A3110"/>
<dbReference type="eggNOG" id="COG0079">
    <property type="taxonomic scope" value="Bacteria"/>
</dbReference>
<dbReference type="HOGENOM" id="CLU_017584_3_1_4"/>
<dbReference type="OrthoDB" id="9813612at2"/>
<dbReference type="UniPathway" id="UPA00031">
    <property type="reaction ID" value="UER00012"/>
</dbReference>
<dbReference type="EvolutionaryTrace" id="Q46WL3"/>
<dbReference type="GO" id="GO:0004400">
    <property type="term" value="F:histidinol-phosphate transaminase activity"/>
    <property type="evidence" value="ECO:0007669"/>
    <property type="project" value="UniProtKB-UniRule"/>
</dbReference>
<dbReference type="GO" id="GO:0030170">
    <property type="term" value="F:pyridoxal phosphate binding"/>
    <property type="evidence" value="ECO:0007669"/>
    <property type="project" value="InterPro"/>
</dbReference>
<dbReference type="GO" id="GO:0000105">
    <property type="term" value="P:L-histidine biosynthetic process"/>
    <property type="evidence" value="ECO:0007669"/>
    <property type="project" value="UniProtKB-UniRule"/>
</dbReference>
<dbReference type="CDD" id="cd00609">
    <property type="entry name" value="AAT_like"/>
    <property type="match status" value="1"/>
</dbReference>
<dbReference type="Gene3D" id="3.90.1150.10">
    <property type="entry name" value="Aspartate Aminotransferase, domain 1"/>
    <property type="match status" value="1"/>
</dbReference>
<dbReference type="Gene3D" id="3.40.640.10">
    <property type="entry name" value="Type I PLP-dependent aspartate aminotransferase-like (Major domain)"/>
    <property type="match status" value="1"/>
</dbReference>
<dbReference type="HAMAP" id="MF_01023">
    <property type="entry name" value="HisC_aminotrans_2"/>
    <property type="match status" value="1"/>
</dbReference>
<dbReference type="InterPro" id="IPR004839">
    <property type="entry name" value="Aminotransferase_I/II_large"/>
</dbReference>
<dbReference type="InterPro" id="IPR005861">
    <property type="entry name" value="HisP_aminotrans"/>
</dbReference>
<dbReference type="InterPro" id="IPR015424">
    <property type="entry name" value="PyrdxlP-dep_Trfase"/>
</dbReference>
<dbReference type="InterPro" id="IPR015421">
    <property type="entry name" value="PyrdxlP-dep_Trfase_major"/>
</dbReference>
<dbReference type="InterPro" id="IPR015422">
    <property type="entry name" value="PyrdxlP-dep_Trfase_small"/>
</dbReference>
<dbReference type="NCBIfam" id="TIGR01141">
    <property type="entry name" value="hisC"/>
    <property type="match status" value="1"/>
</dbReference>
<dbReference type="PANTHER" id="PTHR42885:SF2">
    <property type="entry name" value="HISTIDINOL-PHOSPHATE AMINOTRANSFERASE"/>
    <property type="match status" value="1"/>
</dbReference>
<dbReference type="PANTHER" id="PTHR42885">
    <property type="entry name" value="HISTIDINOL-PHOSPHATE AMINOTRANSFERASE-RELATED"/>
    <property type="match status" value="1"/>
</dbReference>
<dbReference type="Pfam" id="PF00155">
    <property type="entry name" value="Aminotran_1_2"/>
    <property type="match status" value="1"/>
</dbReference>
<dbReference type="SUPFAM" id="SSF53383">
    <property type="entry name" value="PLP-dependent transferases"/>
    <property type="match status" value="1"/>
</dbReference>
<organism>
    <name type="scientific">Cupriavidus pinatubonensis (strain JMP 134 / LMG 1197)</name>
    <name type="common">Cupriavidus necator (strain JMP 134)</name>
    <dbReference type="NCBI Taxonomy" id="264198"/>
    <lineage>
        <taxon>Bacteria</taxon>
        <taxon>Pseudomonadati</taxon>
        <taxon>Pseudomonadota</taxon>
        <taxon>Betaproteobacteria</taxon>
        <taxon>Burkholderiales</taxon>
        <taxon>Burkholderiaceae</taxon>
        <taxon>Cupriavidus</taxon>
    </lineage>
</organism>
<feature type="chain" id="PRO_0000153429" description="Histidinol-phosphate aminotransferase 2">
    <location>
        <begin position="1"/>
        <end position="366"/>
    </location>
</feature>
<feature type="modified residue" description="N6-(pyridoxal phosphate)lysine" evidence="1">
    <location>
        <position position="226"/>
    </location>
</feature>
<feature type="helix" evidence="2">
    <location>
        <begin position="6"/>
        <end position="12"/>
    </location>
</feature>
<feature type="helix" evidence="2">
    <location>
        <begin position="15"/>
        <end position="19"/>
    </location>
</feature>
<feature type="helix" evidence="2">
    <location>
        <begin position="45"/>
        <end position="59"/>
    </location>
</feature>
<feature type="helix" evidence="2">
    <location>
        <begin position="68"/>
        <end position="79"/>
    </location>
</feature>
<feature type="strand" evidence="2">
    <location>
        <begin position="86"/>
        <end position="91"/>
    </location>
</feature>
<feature type="helix" evidence="2">
    <location>
        <begin position="92"/>
        <end position="103"/>
    </location>
</feature>
<feature type="strand" evidence="2">
    <location>
        <begin position="110"/>
        <end position="116"/>
    </location>
</feature>
<feature type="helix" evidence="2">
    <location>
        <begin position="123"/>
        <end position="126"/>
    </location>
</feature>
<feature type="turn" evidence="2">
    <location>
        <begin position="127"/>
        <end position="129"/>
    </location>
</feature>
<feature type="strand" evidence="2">
    <location>
        <begin position="131"/>
        <end position="136"/>
    </location>
</feature>
<feature type="helix" evidence="2">
    <location>
        <begin position="145"/>
        <end position="155"/>
    </location>
</feature>
<feature type="strand" evidence="2">
    <location>
        <begin position="158"/>
        <end position="165"/>
    </location>
</feature>
<feature type="turn" evidence="2">
    <location>
        <begin position="167"/>
        <end position="169"/>
    </location>
</feature>
<feature type="helix" evidence="2">
    <location>
        <begin position="175"/>
        <end position="184"/>
    </location>
</feature>
<feature type="strand" evidence="2">
    <location>
        <begin position="193"/>
        <end position="197"/>
    </location>
</feature>
<feature type="strand" evidence="2">
    <location>
        <begin position="203"/>
        <end position="205"/>
    </location>
</feature>
<feature type="helix" evidence="2">
    <location>
        <begin position="209"/>
        <end position="213"/>
    </location>
</feature>
<feature type="strand" evidence="2">
    <location>
        <begin position="218"/>
        <end position="223"/>
    </location>
</feature>
<feature type="strand" evidence="2">
    <location>
        <begin position="234"/>
        <end position="239"/>
    </location>
</feature>
<feature type="helix" evidence="2">
    <location>
        <begin position="241"/>
        <end position="247"/>
    </location>
</feature>
<feature type="helix" evidence="2">
    <location>
        <begin position="248"/>
        <end position="250"/>
    </location>
</feature>
<feature type="helix" evidence="2">
    <location>
        <begin position="258"/>
        <end position="268"/>
    </location>
</feature>
<feature type="helix" evidence="2">
    <location>
        <begin position="271"/>
        <end position="293"/>
    </location>
</feature>
<feature type="strand" evidence="2">
    <location>
        <begin position="304"/>
        <end position="311"/>
    </location>
</feature>
<feature type="helix" evidence="2">
    <location>
        <begin position="315"/>
        <end position="323"/>
    </location>
</feature>
<feature type="turn" evidence="2">
    <location>
        <begin position="324"/>
        <end position="326"/>
    </location>
</feature>
<feature type="helix" evidence="2">
    <location>
        <begin position="333"/>
        <end position="335"/>
    </location>
</feature>
<feature type="helix" evidence="2">
    <location>
        <begin position="337"/>
        <end position="339"/>
    </location>
</feature>
<feature type="strand" evidence="2">
    <location>
        <begin position="342"/>
        <end position="346"/>
    </location>
</feature>
<feature type="helix" evidence="2">
    <location>
        <begin position="350"/>
        <end position="363"/>
    </location>
</feature>
<accession>Q46WL3</accession>
<reference key="1">
    <citation type="journal article" date="2010" name="PLoS ONE">
        <title>The complete multipartite genome sequence of Cupriavidus necator JMP134, a versatile pollutant degrader.</title>
        <authorList>
            <person name="Lykidis A."/>
            <person name="Perez-Pantoja D."/>
            <person name="Ledger T."/>
            <person name="Mavromatis K."/>
            <person name="Anderson I.J."/>
            <person name="Ivanova N.N."/>
            <person name="Hooper S.D."/>
            <person name="Lapidus A."/>
            <person name="Lucas S."/>
            <person name="Gonzalez B."/>
            <person name="Kyrpides N.C."/>
        </authorList>
    </citation>
    <scope>NUCLEOTIDE SEQUENCE [LARGE SCALE GENOMIC DNA]</scope>
    <source>
        <strain>JMP134 / LMG 1197</strain>
    </source>
</reference>
<gene>
    <name evidence="1" type="primary">hisC2</name>
    <name type="ordered locus">Reut_A3110</name>
</gene>
<evidence type="ECO:0000255" key="1">
    <source>
        <dbReference type="HAMAP-Rule" id="MF_01023"/>
    </source>
</evidence>
<evidence type="ECO:0007829" key="2">
    <source>
        <dbReference type="PDB" id="3EUC"/>
    </source>
</evidence>